<name>ATPD_ORITB</name>
<sequence length="181" mass="21157">MHKLNNVAVLYAKILFKQAIKLNIVSKVKQDLKALKQFCKFLAKQNMSLQLIALMKNKINLMDYLSSTYGLNHLTYNFLKLLQKNNRLTYLSHIIIAFDAQVRNYQGVTLGYLITTKKWSKSAIKEIKDIFERKLNRKLIISNIVDKSIVGGIILRYEDYEYDLSMLGAINRFKSRIKLNY</sequence>
<evidence type="ECO:0000255" key="1">
    <source>
        <dbReference type="HAMAP-Rule" id="MF_01416"/>
    </source>
</evidence>
<dbReference type="EMBL" id="AM494475">
    <property type="protein sequence ID" value="CAM79645.1"/>
    <property type="molecule type" value="Genomic_DNA"/>
</dbReference>
<dbReference type="RefSeq" id="WP_011944558.1">
    <property type="nucleotide sequence ID" value="NC_009488.1"/>
</dbReference>
<dbReference type="SMR" id="A5CD08"/>
<dbReference type="KEGG" id="ots:OTBS_0579"/>
<dbReference type="eggNOG" id="COG0712">
    <property type="taxonomic scope" value="Bacteria"/>
</dbReference>
<dbReference type="HOGENOM" id="CLU_1487630_0_0_5"/>
<dbReference type="Proteomes" id="UP000001565">
    <property type="component" value="Chromosome"/>
</dbReference>
<dbReference type="GO" id="GO:0005886">
    <property type="term" value="C:plasma membrane"/>
    <property type="evidence" value="ECO:0007669"/>
    <property type="project" value="UniProtKB-SubCell"/>
</dbReference>
<dbReference type="GO" id="GO:0045259">
    <property type="term" value="C:proton-transporting ATP synthase complex"/>
    <property type="evidence" value="ECO:0007669"/>
    <property type="project" value="UniProtKB-KW"/>
</dbReference>
<dbReference type="GO" id="GO:0046933">
    <property type="term" value="F:proton-transporting ATP synthase activity, rotational mechanism"/>
    <property type="evidence" value="ECO:0007669"/>
    <property type="project" value="UniProtKB-UniRule"/>
</dbReference>
<dbReference type="Gene3D" id="1.10.520.20">
    <property type="entry name" value="N-terminal domain of the delta subunit of the F1F0-ATP synthase"/>
    <property type="match status" value="1"/>
</dbReference>
<dbReference type="HAMAP" id="MF_01416">
    <property type="entry name" value="ATP_synth_delta_bact"/>
    <property type="match status" value="1"/>
</dbReference>
<dbReference type="InterPro" id="IPR026015">
    <property type="entry name" value="ATP_synth_OSCP/delta_N_sf"/>
</dbReference>
<dbReference type="InterPro" id="IPR020781">
    <property type="entry name" value="ATPase_OSCP/d_CS"/>
</dbReference>
<dbReference type="InterPro" id="IPR000711">
    <property type="entry name" value="ATPase_OSCP/dsu"/>
</dbReference>
<dbReference type="NCBIfam" id="TIGR01145">
    <property type="entry name" value="ATP_synt_delta"/>
    <property type="match status" value="1"/>
</dbReference>
<dbReference type="PANTHER" id="PTHR11910">
    <property type="entry name" value="ATP SYNTHASE DELTA CHAIN"/>
    <property type="match status" value="1"/>
</dbReference>
<dbReference type="Pfam" id="PF00213">
    <property type="entry name" value="OSCP"/>
    <property type="match status" value="1"/>
</dbReference>
<dbReference type="PRINTS" id="PR00125">
    <property type="entry name" value="ATPASEDELTA"/>
</dbReference>
<dbReference type="SUPFAM" id="SSF47928">
    <property type="entry name" value="N-terminal domain of the delta subunit of the F1F0-ATP synthase"/>
    <property type="match status" value="1"/>
</dbReference>
<dbReference type="PROSITE" id="PS00389">
    <property type="entry name" value="ATPASE_DELTA"/>
    <property type="match status" value="1"/>
</dbReference>
<accession>A5CD08</accession>
<keyword id="KW-0066">ATP synthesis</keyword>
<keyword id="KW-0997">Cell inner membrane</keyword>
<keyword id="KW-1003">Cell membrane</keyword>
<keyword id="KW-0139">CF(1)</keyword>
<keyword id="KW-0375">Hydrogen ion transport</keyword>
<keyword id="KW-0406">Ion transport</keyword>
<keyword id="KW-0472">Membrane</keyword>
<keyword id="KW-1185">Reference proteome</keyword>
<keyword id="KW-0813">Transport</keyword>
<organism>
    <name type="scientific">Orientia tsutsugamushi (strain Boryong)</name>
    <name type="common">Rickettsia tsutsugamushi</name>
    <dbReference type="NCBI Taxonomy" id="357244"/>
    <lineage>
        <taxon>Bacteria</taxon>
        <taxon>Pseudomonadati</taxon>
        <taxon>Pseudomonadota</taxon>
        <taxon>Alphaproteobacteria</taxon>
        <taxon>Rickettsiales</taxon>
        <taxon>Rickettsiaceae</taxon>
        <taxon>Rickettsieae</taxon>
        <taxon>Orientia</taxon>
    </lineage>
</organism>
<protein>
    <recommendedName>
        <fullName evidence="1">ATP synthase subunit delta</fullName>
    </recommendedName>
    <alternativeName>
        <fullName evidence="1">ATP synthase F(1) sector subunit delta</fullName>
    </alternativeName>
    <alternativeName>
        <fullName evidence="1">F-type ATPase subunit delta</fullName>
        <shortName evidence="1">F-ATPase subunit delta</shortName>
    </alternativeName>
</protein>
<comment type="function">
    <text evidence="1">F(1)F(0) ATP synthase produces ATP from ADP in the presence of a proton or sodium gradient. F-type ATPases consist of two structural domains, F(1) containing the extramembraneous catalytic core and F(0) containing the membrane proton channel, linked together by a central stalk and a peripheral stalk. During catalysis, ATP synthesis in the catalytic domain of F(1) is coupled via a rotary mechanism of the central stalk subunits to proton translocation.</text>
</comment>
<comment type="function">
    <text evidence="1">This protein is part of the stalk that links CF(0) to CF(1). It either transmits conformational changes from CF(0) to CF(1) or is implicated in proton conduction.</text>
</comment>
<comment type="subunit">
    <text evidence="1">F-type ATPases have 2 components, F(1) - the catalytic core - and F(0) - the membrane proton channel. F(1) has five subunits: alpha(3), beta(3), gamma(1), delta(1), epsilon(1). F(0) has three main subunits: a(1), b(2) and c(10-14). The alpha and beta chains form an alternating ring which encloses part of the gamma chain. F(1) is attached to F(0) by a central stalk formed by the gamma and epsilon chains, while a peripheral stalk is formed by the delta and b chains.</text>
</comment>
<comment type="subcellular location">
    <subcellularLocation>
        <location evidence="1">Cell inner membrane</location>
        <topology evidence="1">Peripheral membrane protein</topology>
    </subcellularLocation>
</comment>
<comment type="similarity">
    <text evidence="1">Belongs to the ATPase delta chain family.</text>
</comment>
<gene>
    <name evidence="1" type="primary">atpH</name>
    <name type="ordered locus">OTBS_0579</name>
</gene>
<proteinExistence type="inferred from homology"/>
<feature type="chain" id="PRO_0000382134" description="ATP synthase subunit delta">
    <location>
        <begin position="1"/>
        <end position="181"/>
    </location>
</feature>
<reference key="1">
    <citation type="journal article" date="2007" name="Proc. Natl. Acad. Sci. U.S.A.">
        <title>The Orientia tsutsugamushi genome reveals massive proliferation of conjugative type IV secretion system and host-cell interaction genes.</title>
        <authorList>
            <person name="Cho N.-H."/>
            <person name="Kim H.-R."/>
            <person name="Lee J.-H."/>
            <person name="Kim S.-Y."/>
            <person name="Kim J."/>
            <person name="Cha S."/>
            <person name="Kim S.-Y."/>
            <person name="Darby A.C."/>
            <person name="Fuxelius H.-H."/>
            <person name="Yin J."/>
            <person name="Kim J.H."/>
            <person name="Kim J."/>
            <person name="Lee S.J."/>
            <person name="Koh Y.-S."/>
            <person name="Jang W.-J."/>
            <person name="Park K.-H."/>
            <person name="Andersson S.G.E."/>
            <person name="Choi M.-S."/>
            <person name="Kim I.-S."/>
        </authorList>
    </citation>
    <scope>NUCLEOTIDE SEQUENCE [LARGE SCALE GENOMIC DNA]</scope>
    <source>
        <strain>Boryong</strain>
    </source>
</reference>